<organism>
    <name type="scientific">Pycnoporus cinnabarinus</name>
    <name type="common">Cinnabar-red polypore</name>
    <name type="synonym">Trametes cinnabarina</name>
    <dbReference type="NCBI Taxonomy" id="5643"/>
    <lineage>
        <taxon>Eukaryota</taxon>
        <taxon>Fungi</taxon>
        <taxon>Dikarya</taxon>
        <taxon>Basidiomycota</taxon>
        <taxon>Agaricomycotina</taxon>
        <taxon>Agaricomycetes</taxon>
        <taxon>Polyporales</taxon>
        <taxon>Polyporaceae</taxon>
        <taxon>Trametes</taxon>
    </lineage>
</organism>
<name>LAC1_PYCCI</name>
<keyword id="KW-0186">Copper</keyword>
<keyword id="KW-0903">Direct protein sequencing</keyword>
<keyword id="KW-1015">Disulfide bond</keyword>
<keyword id="KW-0325">Glycoprotein</keyword>
<keyword id="KW-0439">Lignin degradation</keyword>
<keyword id="KW-0479">Metal-binding</keyword>
<keyword id="KW-0560">Oxidoreductase</keyword>
<keyword id="KW-0677">Repeat</keyword>
<keyword id="KW-0964">Secreted</keyword>
<keyword id="KW-0732">Signal</keyword>
<feature type="signal peptide" evidence="5">
    <location>
        <begin position="1"/>
        <end position="21"/>
    </location>
</feature>
<feature type="chain" id="PRO_0000002934" description="Laccase">
    <location>
        <begin position="22"/>
        <end position="518"/>
    </location>
</feature>
<feature type="domain" description="Plastocyanin-like 1">
    <location>
        <begin position="23"/>
        <end position="148"/>
    </location>
</feature>
<feature type="domain" description="Plastocyanin-like 2">
    <location>
        <begin position="160"/>
        <end position="302"/>
    </location>
</feature>
<feature type="domain" description="Plastocyanin-like 3">
    <location>
        <begin position="369"/>
        <end position="489"/>
    </location>
</feature>
<feature type="region of interest" description="Disordered" evidence="4">
    <location>
        <begin position="308"/>
        <end position="330"/>
    </location>
</feature>
<feature type="binding site" description="type 2 copper site" evidence="1">
    <location>
        <position position="85"/>
    </location>
    <ligand>
        <name>Cu cation</name>
        <dbReference type="ChEBI" id="CHEBI:23378"/>
        <label>1</label>
    </ligand>
</feature>
<feature type="binding site" description="type 3 copper site" evidence="1">
    <location>
        <position position="87"/>
    </location>
    <ligand>
        <name>Cu cation</name>
        <dbReference type="ChEBI" id="CHEBI:23378"/>
        <label>2</label>
    </ligand>
</feature>
<feature type="binding site" description="type 3 copper site" evidence="1">
    <location>
        <position position="130"/>
    </location>
    <ligand>
        <name>Cu cation</name>
        <dbReference type="ChEBI" id="CHEBI:23378"/>
        <label>2</label>
    </ligand>
</feature>
<feature type="binding site" description="type 3 copper site" evidence="1">
    <location>
        <position position="132"/>
    </location>
    <ligand>
        <name>Cu cation</name>
        <dbReference type="ChEBI" id="CHEBI:23378"/>
        <label>3</label>
    </ligand>
</feature>
<feature type="binding site" description="type 1 copper site" evidence="1">
    <location>
        <position position="416"/>
    </location>
    <ligand>
        <name>Cu cation</name>
        <dbReference type="ChEBI" id="CHEBI:23378"/>
        <label>4</label>
    </ligand>
</feature>
<feature type="binding site" description="type 2 copper site" evidence="1">
    <location>
        <position position="419"/>
    </location>
    <ligand>
        <name>Cu cation</name>
        <dbReference type="ChEBI" id="CHEBI:23378"/>
        <label>1</label>
    </ligand>
</feature>
<feature type="binding site" description="type 3 copper site" evidence="1">
    <location>
        <position position="421"/>
    </location>
    <ligand>
        <name>Cu cation</name>
        <dbReference type="ChEBI" id="CHEBI:23378"/>
        <label>3</label>
    </ligand>
</feature>
<feature type="binding site" description="type 3 copper site" evidence="1">
    <location>
        <position position="471"/>
    </location>
    <ligand>
        <name>Cu cation</name>
        <dbReference type="ChEBI" id="CHEBI:23378"/>
        <label>3</label>
    </ligand>
</feature>
<feature type="binding site" description="type 1 copper site" evidence="1">
    <location>
        <position position="472"/>
    </location>
    <ligand>
        <name>Cu cation</name>
        <dbReference type="ChEBI" id="CHEBI:23378"/>
        <label>4</label>
    </ligand>
</feature>
<feature type="binding site" description="type 3 copper site" evidence="1">
    <location>
        <position position="473"/>
    </location>
    <ligand>
        <name>Cu cation</name>
        <dbReference type="ChEBI" id="CHEBI:23378"/>
        <label>2</label>
    </ligand>
</feature>
<feature type="binding site" description="type 1 copper site" evidence="1">
    <location>
        <position position="477"/>
    </location>
    <ligand>
        <name>Cu cation</name>
        <dbReference type="ChEBI" id="CHEBI:23378"/>
        <label>4</label>
    </ligand>
</feature>
<feature type="glycosylation site" description="N-linked (GlcNAc...) asparagine" evidence="3">
    <location>
        <position position="72"/>
    </location>
</feature>
<feature type="glycosylation site" description="N-linked (GlcNAc...) asparagine" evidence="3">
    <location>
        <position position="75"/>
    </location>
</feature>
<feature type="glycosylation site" description="N-linked (GlcNAc...) asparagine" evidence="3">
    <location>
        <position position="229"/>
    </location>
</feature>
<feature type="glycosylation site" description="N-linked (GlcNAc...) asparagine" evidence="3">
    <location>
        <position position="354"/>
    </location>
</feature>
<feature type="glycosylation site" description="N-linked (GlcNAc...) asparagine" evidence="3">
    <location>
        <position position="362"/>
    </location>
</feature>
<feature type="glycosylation site" description="N-linked (GlcNAc...) asparagine" evidence="3">
    <location>
        <position position="398"/>
    </location>
</feature>
<feature type="disulfide bond" evidence="2">
    <location>
        <begin position="106"/>
        <end position="507"/>
    </location>
</feature>
<feature type="disulfide bond" evidence="1">
    <location>
        <begin position="138"/>
        <end position="226"/>
    </location>
</feature>
<feature type="sequence conflict" description="In Ref. 2; AAN71597." evidence="7" ref="2">
    <original>N</original>
    <variation>S</variation>
    <location>
        <position position="348"/>
    </location>
</feature>
<comment type="function">
    <text evidence="2 5 6">Lignin degradation and detoxification of lignin-derived products (By similarity). Cleaves the C-C and C-O bonds of some phenolic lignin model compounds (such as O- and P-quinols, aminophenols and phenylenediamine) (PubMed:8919775). May also be involved in synthesis of phenoxazinone pigments (PubMed:9572949).</text>
</comment>
<comment type="catalytic activity">
    <reaction evidence="2">
        <text>4 hydroquinone + O2 = 4 benzosemiquinone + 2 H2O</text>
        <dbReference type="Rhea" id="RHEA:11276"/>
        <dbReference type="ChEBI" id="CHEBI:15377"/>
        <dbReference type="ChEBI" id="CHEBI:15379"/>
        <dbReference type="ChEBI" id="CHEBI:17594"/>
        <dbReference type="ChEBI" id="CHEBI:17977"/>
        <dbReference type="EC" id="1.10.3.2"/>
    </reaction>
</comment>
<comment type="cofactor">
    <cofactor evidence="2">
        <name>Cu cation</name>
        <dbReference type="ChEBI" id="CHEBI:23378"/>
    </cofactor>
    <text evidence="2">Binds 4 Cu cations per monomer.</text>
</comment>
<comment type="subcellular location">
    <subcellularLocation>
        <location evidence="2">Secreted</location>
    </subcellularLocation>
</comment>
<comment type="induction">
    <text evidence="5">By lignosulfonate, veratryl alcohol and 2,5-xylidine.</text>
</comment>
<comment type="similarity">
    <text evidence="7">Belongs to the multicopper oxidase family.</text>
</comment>
<gene>
    <name type="primary">LCC3-1</name>
    <name type="synonym">LAC3</name>
    <name type="synonym">LCC1</name>
</gene>
<protein>
    <recommendedName>
        <fullName>Laccase</fullName>
        <ecNumber evidence="2">1.10.3.2</ecNumber>
    </recommendedName>
    <alternativeName>
        <fullName>Benzenediol:oxygen oxidoreductase</fullName>
    </alternativeName>
    <alternativeName>
        <fullName>Diphenol oxidase</fullName>
    </alternativeName>
    <alternativeName>
        <fullName>Ligninolytic phenoloxidase</fullName>
    </alternativeName>
    <alternativeName>
        <fullName>Urishiol oxidase</fullName>
    </alternativeName>
</protein>
<dbReference type="EC" id="1.10.3.2" evidence="2"/>
<dbReference type="EMBL" id="AF025481">
    <property type="protein sequence ID" value="AAC39469.1"/>
    <property type="molecule type" value="Genomic_DNA"/>
</dbReference>
<dbReference type="EMBL" id="AY147188">
    <property type="protein sequence ID" value="AAN71597.1"/>
    <property type="molecule type" value="Genomic_DNA"/>
</dbReference>
<dbReference type="EMBL" id="AJ420334">
    <property type="protein sequence ID" value="CAD12461.1"/>
    <property type="molecule type" value="mRNA"/>
</dbReference>
<dbReference type="SMR" id="O59896"/>
<dbReference type="CAZy" id="AA1">
    <property type="family name" value="Auxiliary Activities 1"/>
</dbReference>
<dbReference type="GlyCosmos" id="O59896">
    <property type="glycosylation" value="6 sites, No reported glycans"/>
</dbReference>
<dbReference type="GO" id="GO:0005576">
    <property type="term" value="C:extracellular region"/>
    <property type="evidence" value="ECO:0007669"/>
    <property type="project" value="UniProtKB-SubCell"/>
</dbReference>
<dbReference type="GO" id="GO:0005507">
    <property type="term" value="F:copper ion binding"/>
    <property type="evidence" value="ECO:0007669"/>
    <property type="project" value="InterPro"/>
</dbReference>
<dbReference type="GO" id="GO:0052716">
    <property type="term" value="F:hydroquinone:oxygen oxidoreductase activity"/>
    <property type="evidence" value="ECO:0007669"/>
    <property type="project" value="UniProtKB-EC"/>
</dbReference>
<dbReference type="GO" id="GO:0046274">
    <property type="term" value="P:lignin catabolic process"/>
    <property type="evidence" value="ECO:0007669"/>
    <property type="project" value="UniProtKB-KW"/>
</dbReference>
<dbReference type="CDD" id="cd13856">
    <property type="entry name" value="CuRO_1_Tv-LCC_like"/>
    <property type="match status" value="1"/>
</dbReference>
<dbReference type="CDD" id="cd13882">
    <property type="entry name" value="CuRO_2_Tv-LCC_like"/>
    <property type="match status" value="1"/>
</dbReference>
<dbReference type="CDD" id="cd13903">
    <property type="entry name" value="CuRO_3_Tv-LCC_like"/>
    <property type="match status" value="1"/>
</dbReference>
<dbReference type="FunFam" id="2.60.40.420:FF:000045">
    <property type="entry name" value="Laccase 2"/>
    <property type="match status" value="1"/>
</dbReference>
<dbReference type="FunFam" id="2.60.40.420:FF:000125">
    <property type="entry name" value="Laccase 2"/>
    <property type="match status" value="1"/>
</dbReference>
<dbReference type="FunFam" id="2.60.40.420:FF:000112">
    <property type="entry name" value="Laccase B"/>
    <property type="match status" value="1"/>
</dbReference>
<dbReference type="Gene3D" id="2.60.40.420">
    <property type="entry name" value="Cupredoxins - blue copper proteins"/>
    <property type="match status" value="3"/>
</dbReference>
<dbReference type="InterPro" id="IPR011707">
    <property type="entry name" value="Cu-oxidase-like_N"/>
</dbReference>
<dbReference type="InterPro" id="IPR001117">
    <property type="entry name" value="Cu-oxidase_2nd"/>
</dbReference>
<dbReference type="InterPro" id="IPR011706">
    <property type="entry name" value="Cu-oxidase_C"/>
</dbReference>
<dbReference type="InterPro" id="IPR045087">
    <property type="entry name" value="Cu-oxidase_fam"/>
</dbReference>
<dbReference type="InterPro" id="IPR033138">
    <property type="entry name" value="Cu_oxidase_CS"/>
</dbReference>
<dbReference type="InterPro" id="IPR008972">
    <property type="entry name" value="Cupredoxin"/>
</dbReference>
<dbReference type="PANTHER" id="PTHR11709:SF394">
    <property type="entry name" value="FI03373P-RELATED"/>
    <property type="match status" value="1"/>
</dbReference>
<dbReference type="PANTHER" id="PTHR11709">
    <property type="entry name" value="MULTI-COPPER OXIDASE"/>
    <property type="match status" value="1"/>
</dbReference>
<dbReference type="Pfam" id="PF00394">
    <property type="entry name" value="Cu-oxidase"/>
    <property type="match status" value="1"/>
</dbReference>
<dbReference type="Pfam" id="PF07731">
    <property type="entry name" value="Cu-oxidase_2"/>
    <property type="match status" value="1"/>
</dbReference>
<dbReference type="Pfam" id="PF07732">
    <property type="entry name" value="Cu-oxidase_3"/>
    <property type="match status" value="1"/>
</dbReference>
<dbReference type="SUPFAM" id="SSF49503">
    <property type="entry name" value="Cupredoxins"/>
    <property type="match status" value="3"/>
</dbReference>
<dbReference type="PROSITE" id="PS00079">
    <property type="entry name" value="MULTICOPPER_OXIDASE1"/>
    <property type="match status" value="1"/>
</dbReference>
<sequence length="518" mass="55986">MSRFQSLLSFVLVSLAAVANAAIGPVADLTLTNAAVSPDGFSREAVVVNGITPAPLIAGQKGDRFQLNVIDNLTNHTMLKTTSIHWHGFFQHGTNWADGVSFVNQCPIASGHSFLYDFQVPDQAGTFWYHSHLSTQYCDGLRGPFVVYDPNDPQASLYDIDNDDTVITLADWYHVAAKLGPRFPLGADATLINGLGRSPGTTTADLAVIKVTQGKRYRFRLVSLSCDPNHTFSIDGHTMTVIEADSVNTQPLEVDSIQIFAAQRYSFVLDASQPVDNYWIRANPAFGNVGFAGGINSAILRYDGAPEVEPTTTQTTSTKPLNEADLHPLTPMPVPGRPEAGGVDKPLNMVFNFNGTNFFINNHSFVPPSVPVLLQILSGAQAAQDLVPDGSVYVLPSNSSIEISFPATANAPGTPHPFHLHGHTFAVVRSAGSSEYNYDNPIFRDVVSTGQPGDNVTIRFQTNNPGPWFLHCHIDFHLEAGFAVVLAEDTPDTAAVNPVPQSWSDLCPIYDALDPSDL</sequence>
<proteinExistence type="evidence at protein level"/>
<accession>O59896</accession>
<accession>Q8J1Y2</accession>
<accession>Q8WZN9</accession>
<evidence type="ECO:0000250" key="1">
    <source>
        <dbReference type="UniProtKB" id="D0VWU3"/>
    </source>
</evidence>
<evidence type="ECO:0000250" key="2">
    <source>
        <dbReference type="UniProtKB" id="Q70KY3"/>
    </source>
</evidence>
<evidence type="ECO:0000255" key="3"/>
<evidence type="ECO:0000256" key="4">
    <source>
        <dbReference type="SAM" id="MobiDB-lite"/>
    </source>
</evidence>
<evidence type="ECO:0000269" key="5">
    <source>
    </source>
</evidence>
<evidence type="ECO:0000303" key="6">
    <source>
    </source>
</evidence>
<evidence type="ECO:0000305" key="7"/>
<reference key="1">
    <citation type="journal article" date="1998" name="Appl. Environ. Microbiol.">
        <title>Molecular analysis of a laccase gene from the white rot fungus Pycnoporus cinnabarinus.</title>
        <authorList>
            <person name="Eggert C."/>
            <person name="LaFayette P.R."/>
            <person name="Temp U."/>
            <person name="Eriksson K.-E.L."/>
            <person name="Dean J.F.D."/>
        </authorList>
    </citation>
    <scope>NUCLEOTIDE SEQUENCE [GENOMIC DNA]</scope>
    <scope>FUNCTION</scope>
    <source>
        <strain>ATCC 200478 / PB</strain>
        <tissue>Mycelium</tissue>
    </source>
</reference>
<reference key="2">
    <citation type="submission" date="2002-09" db="EMBL/GenBank/DDBJ databases">
        <title>Cloning, characterization and expression of laccase gene from white rot fungus Pycnoporus cinnabarinus.</title>
        <authorList>
            <person name="Dhawan S."/>
            <person name="Lal R."/>
            <person name="Kuhad R.C."/>
        </authorList>
    </citation>
    <scope>NUCLEOTIDE SEQUENCE [GENOMIC DNA]</scope>
</reference>
<reference key="3">
    <citation type="submission" date="2001-11" db="EMBL/GenBank/DDBJ databases">
        <title>Molecular biological monitoring of soil fungi with laccase genes.</title>
        <authorList>
            <person name="Luis P."/>
            <person name="Buscot F."/>
        </authorList>
    </citation>
    <scope>NUCLEOTIDE SEQUENCE OF 85-131</scope>
    <source>
        <tissue>Mycelium</tissue>
    </source>
</reference>
<reference key="4">
    <citation type="journal article" date="1996" name="Appl. Environ. Microbiol.">
        <title>The ligninolytic system of the white rot fungus Pycnoporus cinnabarinus: purification and characterization of the laccase.</title>
        <authorList>
            <person name="Eggert C."/>
            <person name="Temp U."/>
            <person name="Eriksson K.-E.L."/>
        </authorList>
    </citation>
    <scope>PROTEIN SEQUENCE OF 22-42</scope>
    <scope>CHARACTERIZATION</scope>
    <scope>FUNCTION</scope>
    <scope>INDUCTION</scope>
    <source>
        <strain>ATCC 200478 / PB</strain>
        <tissue>Mycelium</tissue>
    </source>
</reference>